<gene>
    <name evidence="1" type="primary">rsmA</name>
    <name evidence="1" type="synonym">ksgA</name>
    <name type="ordered locus">DP2175</name>
</gene>
<feature type="chain" id="PRO_0000101522" description="Ribosomal RNA small subunit methyltransferase A">
    <location>
        <begin position="1"/>
        <end position="295"/>
    </location>
</feature>
<feature type="binding site" evidence="1">
    <location>
        <position position="25"/>
    </location>
    <ligand>
        <name>S-adenosyl-L-methionine</name>
        <dbReference type="ChEBI" id="CHEBI:59789"/>
    </ligand>
</feature>
<feature type="binding site" evidence="1">
    <location>
        <position position="27"/>
    </location>
    <ligand>
        <name>S-adenosyl-L-methionine</name>
        <dbReference type="ChEBI" id="CHEBI:59789"/>
    </ligand>
</feature>
<feature type="binding site" evidence="1">
    <location>
        <position position="52"/>
    </location>
    <ligand>
        <name>S-adenosyl-L-methionine</name>
        <dbReference type="ChEBI" id="CHEBI:59789"/>
    </ligand>
</feature>
<feature type="binding site" evidence="1">
    <location>
        <position position="73"/>
    </location>
    <ligand>
        <name>S-adenosyl-L-methionine</name>
        <dbReference type="ChEBI" id="CHEBI:59789"/>
    </ligand>
</feature>
<feature type="binding site" evidence="1">
    <location>
        <position position="98"/>
    </location>
    <ligand>
        <name>S-adenosyl-L-methionine</name>
        <dbReference type="ChEBI" id="CHEBI:59789"/>
    </ligand>
</feature>
<feature type="binding site" evidence="1">
    <location>
        <position position="120"/>
    </location>
    <ligand>
        <name>S-adenosyl-L-methionine</name>
        <dbReference type="ChEBI" id="CHEBI:59789"/>
    </ligand>
</feature>
<name>RSMA_DESPS</name>
<keyword id="KW-0963">Cytoplasm</keyword>
<keyword id="KW-0489">Methyltransferase</keyword>
<keyword id="KW-1185">Reference proteome</keyword>
<keyword id="KW-0694">RNA-binding</keyword>
<keyword id="KW-0698">rRNA processing</keyword>
<keyword id="KW-0949">S-adenosyl-L-methionine</keyword>
<keyword id="KW-0808">Transferase</keyword>
<evidence type="ECO:0000255" key="1">
    <source>
        <dbReference type="HAMAP-Rule" id="MF_00607"/>
    </source>
</evidence>
<protein>
    <recommendedName>
        <fullName evidence="1">Ribosomal RNA small subunit methyltransferase A</fullName>
        <ecNumber evidence="1">2.1.1.182</ecNumber>
    </recommendedName>
    <alternativeName>
        <fullName evidence="1">16S rRNA (adenine(1518)-N(6)/adenine(1519)-N(6))-dimethyltransferase</fullName>
    </alternativeName>
    <alternativeName>
        <fullName evidence="1">16S rRNA dimethyladenosine transferase</fullName>
    </alternativeName>
    <alternativeName>
        <fullName evidence="1">16S rRNA dimethylase</fullName>
    </alternativeName>
    <alternativeName>
        <fullName evidence="1">S-adenosylmethionine-6-N', N'-adenosyl(rRNA) dimethyltransferase</fullName>
    </alternativeName>
</protein>
<proteinExistence type="inferred from homology"/>
<organism>
    <name type="scientific">Desulfotalea psychrophila (strain LSv54 / DSM 12343)</name>
    <dbReference type="NCBI Taxonomy" id="177439"/>
    <lineage>
        <taxon>Bacteria</taxon>
        <taxon>Pseudomonadati</taxon>
        <taxon>Thermodesulfobacteriota</taxon>
        <taxon>Desulfobulbia</taxon>
        <taxon>Desulfobulbales</taxon>
        <taxon>Desulfocapsaceae</taxon>
        <taxon>Desulfotalea</taxon>
    </lineage>
</organism>
<accession>Q6AL71</accession>
<dbReference type="EC" id="2.1.1.182" evidence="1"/>
<dbReference type="EMBL" id="CR522870">
    <property type="protein sequence ID" value="CAG36904.1"/>
    <property type="molecule type" value="Genomic_DNA"/>
</dbReference>
<dbReference type="RefSeq" id="WP_011189416.1">
    <property type="nucleotide sequence ID" value="NC_006138.1"/>
</dbReference>
<dbReference type="SMR" id="Q6AL71"/>
<dbReference type="STRING" id="177439.DP2175"/>
<dbReference type="KEGG" id="dps:DP2175"/>
<dbReference type="eggNOG" id="COG0030">
    <property type="taxonomic scope" value="Bacteria"/>
</dbReference>
<dbReference type="HOGENOM" id="CLU_041220_0_0_7"/>
<dbReference type="OrthoDB" id="9814755at2"/>
<dbReference type="Proteomes" id="UP000000602">
    <property type="component" value="Chromosome"/>
</dbReference>
<dbReference type="GO" id="GO:0005829">
    <property type="term" value="C:cytosol"/>
    <property type="evidence" value="ECO:0007669"/>
    <property type="project" value="TreeGrafter"/>
</dbReference>
<dbReference type="GO" id="GO:0052908">
    <property type="term" value="F:16S rRNA (adenine(1518)-N(6)/adenine(1519)-N(6))-dimethyltransferase activity"/>
    <property type="evidence" value="ECO:0007669"/>
    <property type="project" value="UniProtKB-EC"/>
</dbReference>
<dbReference type="GO" id="GO:0003723">
    <property type="term" value="F:RNA binding"/>
    <property type="evidence" value="ECO:0007669"/>
    <property type="project" value="UniProtKB-KW"/>
</dbReference>
<dbReference type="CDD" id="cd02440">
    <property type="entry name" value="AdoMet_MTases"/>
    <property type="match status" value="1"/>
</dbReference>
<dbReference type="Gene3D" id="1.10.8.100">
    <property type="entry name" value="Ribosomal RNA adenine dimethylase-like, domain 2"/>
    <property type="match status" value="1"/>
</dbReference>
<dbReference type="Gene3D" id="3.40.50.150">
    <property type="entry name" value="Vaccinia Virus protein VP39"/>
    <property type="match status" value="1"/>
</dbReference>
<dbReference type="HAMAP" id="MF_00607">
    <property type="entry name" value="16SrRNA_methyltr_A"/>
    <property type="match status" value="1"/>
</dbReference>
<dbReference type="InterPro" id="IPR001737">
    <property type="entry name" value="KsgA/Erm"/>
</dbReference>
<dbReference type="InterPro" id="IPR023165">
    <property type="entry name" value="rRNA_Ade_diMease-like_C"/>
</dbReference>
<dbReference type="InterPro" id="IPR020596">
    <property type="entry name" value="rRNA_Ade_Mease_Trfase_CS"/>
</dbReference>
<dbReference type="InterPro" id="IPR020598">
    <property type="entry name" value="rRNA_Ade_methylase_Trfase_N"/>
</dbReference>
<dbReference type="InterPro" id="IPR011530">
    <property type="entry name" value="rRNA_adenine_dimethylase"/>
</dbReference>
<dbReference type="InterPro" id="IPR029063">
    <property type="entry name" value="SAM-dependent_MTases_sf"/>
</dbReference>
<dbReference type="NCBIfam" id="TIGR00755">
    <property type="entry name" value="ksgA"/>
    <property type="match status" value="1"/>
</dbReference>
<dbReference type="PANTHER" id="PTHR11727">
    <property type="entry name" value="DIMETHYLADENOSINE TRANSFERASE"/>
    <property type="match status" value="1"/>
</dbReference>
<dbReference type="PANTHER" id="PTHR11727:SF7">
    <property type="entry name" value="DIMETHYLADENOSINE TRANSFERASE-RELATED"/>
    <property type="match status" value="1"/>
</dbReference>
<dbReference type="Pfam" id="PF00398">
    <property type="entry name" value="RrnaAD"/>
    <property type="match status" value="1"/>
</dbReference>
<dbReference type="SMART" id="SM00650">
    <property type="entry name" value="rADc"/>
    <property type="match status" value="1"/>
</dbReference>
<dbReference type="SUPFAM" id="SSF53335">
    <property type="entry name" value="S-adenosyl-L-methionine-dependent methyltransferases"/>
    <property type="match status" value="1"/>
</dbReference>
<dbReference type="PROSITE" id="PS01131">
    <property type="entry name" value="RRNA_A_DIMETH"/>
    <property type="match status" value="1"/>
</dbReference>
<dbReference type="PROSITE" id="PS51689">
    <property type="entry name" value="SAM_RNA_A_N6_MT"/>
    <property type="match status" value="1"/>
</dbReference>
<reference key="1">
    <citation type="journal article" date="2004" name="Environ. Microbiol.">
        <title>The genome of Desulfotalea psychrophila, a sulfate-reducing bacterium from permanently cold Arctic sediments.</title>
        <authorList>
            <person name="Rabus R."/>
            <person name="Ruepp A."/>
            <person name="Frickey T."/>
            <person name="Rattei T."/>
            <person name="Fartmann B."/>
            <person name="Stark M."/>
            <person name="Bauer M."/>
            <person name="Zibat A."/>
            <person name="Lombardot T."/>
            <person name="Becker I."/>
            <person name="Amann J."/>
            <person name="Gellner K."/>
            <person name="Teeling H."/>
            <person name="Leuschner W.D."/>
            <person name="Gloeckner F.-O."/>
            <person name="Lupas A.N."/>
            <person name="Amann R."/>
            <person name="Klenk H.-P."/>
        </authorList>
    </citation>
    <scope>NUCLEOTIDE SEQUENCE [LARGE SCALE GENOMIC DNA]</scope>
    <source>
        <strain>DSM 12343 / LSv54</strain>
    </source>
</reference>
<sequence>MSSYGRTRTDLKKHKLAPKKRFGQNFLVHKQTAEAIVRAGEVGEDDIITEIGVGLGALTVPMAHQAKHVYGIEIDNGIIKYHEEEQDLPDNVTLIHQDVLKVGFGDLAEKCGGKLKILANLPYSISHPLIFKLIEHRDIIPTATIMLQEEVADRLLAKPGTKEYGIPTILLGCCASIKKKMVLKPAEFHPRPKIDSAVITVDFTKPPELPEYNKELLSRVVRSAFSQRRKTILNTLSSASFFFAEKENKAKNKAMTEKTIEKAGFAVSLRPEVLSIQDFVRLTTVFEQEMNRTEE</sequence>
<comment type="function">
    <text evidence="1">Specifically dimethylates two adjacent adenosines (A1518 and A1519) in the loop of a conserved hairpin near the 3'-end of 16S rRNA in the 30S particle. May play a critical role in biogenesis of 30S subunits.</text>
</comment>
<comment type="catalytic activity">
    <reaction evidence="1">
        <text>adenosine(1518)/adenosine(1519) in 16S rRNA + 4 S-adenosyl-L-methionine = N(6)-dimethyladenosine(1518)/N(6)-dimethyladenosine(1519) in 16S rRNA + 4 S-adenosyl-L-homocysteine + 4 H(+)</text>
        <dbReference type="Rhea" id="RHEA:19609"/>
        <dbReference type="Rhea" id="RHEA-COMP:10232"/>
        <dbReference type="Rhea" id="RHEA-COMP:10233"/>
        <dbReference type="ChEBI" id="CHEBI:15378"/>
        <dbReference type="ChEBI" id="CHEBI:57856"/>
        <dbReference type="ChEBI" id="CHEBI:59789"/>
        <dbReference type="ChEBI" id="CHEBI:74411"/>
        <dbReference type="ChEBI" id="CHEBI:74493"/>
        <dbReference type="EC" id="2.1.1.182"/>
    </reaction>
</comment>
<comment type="subcellular location">
    <subcellularLocation>
        <location evidence="1">Cytoplasm</location>
    </subcellularLocation>
</comment>
<comment type="similarity">
    <text evidence="1">Belongs to the class I-like SAM-binding methyltransferase superfamily. rRNA adenine N(6)-methyltransferase family. RsmA subfamily.</text>
</comment>